<proteinExistence type="evidence at protein level"/>
<name>RNC_ECOLI</name>
<sequence length="226" mass="25550">MNPIVINRLQRKLGYTFNHQELLQQALTHRSASSKHNERLEFLGDSILSYVIANALYHRFPRVDEGDMSRMRATLVRGNTLAELAREFELGECLRLGPGELKSGGFRRESILADTVEALIGGVFLDSDIQTVEKLILNWYQTRLDEISPGDKQKDPKTRLQEYLQGRHLPLPTYLVVQVRGEAHDQEFTIHCQVSGLSEPVVGTGSSRRKAEQAAAEQALKKLELE</sequence>
<gene>
    <name type="primary">rnc</name>
    <name type="ordered locus">b2567</name>
    <name type="ordered locus">JW2551</name>
</gene>
<feature type="chain" id="PRO_0000180395" description="Ribonuclease 3">
    <location>
        <begin position="1"/>
        <end position="226"/>
    </location>
</feature>
<feature type="domain" description="RNase III">
    <location>
        <begin position="6"/>
        <end position="128"/>
    </location>
</feature>
<feature type="domain" description="DRBM">
    <location>
        <begin position="155"/>
        <end position="225"/>
    </location>
</feature>
<feature type="active site" evidence="2">
    <location>
        <position position="45"/>
    </location>
</feature>
<feature type="active site" evidence="23">
    <location>
        <position position="117"/>
    </location>
</feature>
<feature type="binding site" evidence="23">
    <location>
        <position position="41"/>
    </location>
    <ligand>
        <name>Mg(2+)</name>
        <dbReference type="ChEBI" id="CHEBI:18420"/>
    </ligand>
</feature>
<feature type="binding site" evidence="1">
    <location>
        <position position="114"/>
    </location>
    <ligand>
        <name>Mg(2+)</name>
        <dbReference type="ChEBI" id="CHEBI:18420"/>
    </ligand>
</feature>
<feature type="binding site" evidence="23">
    <location>
        <position position="117"/>
    </location>
    <ligand>
        <name>Mg(2+)</name>
        <dbReference type="ChEBI" id="CHEBI:18420"/>
    </ligand>
</feature>
<feature type="mutagenesis site" description="Reduced affinity for Mg(2+), no catalytic defect at 10 mM Mg(2+)." evidence="5">
    <original>E</original>
    <variation>A</variation>
    <location>
        <position position="38"/>
    </location>
</feature>
<feature type="mutagenesis site" description="Loss of activity." evidence="4">
    <original>L</original>
    <variation>G</variation>
    <variation>D</variation>
    <variation>R</variation>
    <location>
        <position position="40"/>
    </location>
</feature>
<feature type="mutagenesis site" description="No effect." evidence="4">
    <original>L</original>
    <variation>M</variation>
    <variation>W</variation>
    <location>
        <position position="40"/>
    </location>
</feature>
<feature type="mutagenesis site" description="Reduced affinity for Mg(2+), catalytic defect. 85-fold reduced affinity for Mg(2+); when associated with A-114." evidence="5">
    <original>E</original>
    <variation>A</variation>
    <location>
        <position position="41"/>
    </location>
</feature>
<feature type="mutagenesis site" description="In rnc-105; slower growth, loss of RNase activity." evidence="13 22">
    <original>G</original>
    <variation>S</variation>
    <location>
        <position position="44"/>
    </location>
</feature>
<feature type="mutagenesis site" description="30000-fold reduction in catalytic efficiency, binds RNA normally. Partially rescued by Mn(2+)." evidence="5">
    <original>D</original>
    <variation>A</variation>
    <variation>E</variation>
    <variation>N</variation>
    <location>
        <position position="45"/>
    </location>
</feature>
<feature type="mutagenesis site" description="Reduced affinity for Mg(2+), no catalytic defect at 10 mM Mg(2+)." evidence="5">
    <original>E</original>
    <variation>A</variation>
    <location>
        <position position="65"/>
    </location>
</feature>
<feature type="mutagenesis site" description="Reduced affinity for Mg(2+) and RNA." evidence="5">
    <original>E</original>
    <variation>A</variation>
    <location>
        <position position="100"/>
    </location>
</feature>
<feature type="mutagenesis site" description="Reduced affinity for Mg(2+), no catalytic defect at 10 mM Mg(2+). 85-fold reduced affinity for Mg(2+); when associated with A-41." evidence="5">
    <original>D</original>
    <variation>A</variation>
    <location>
        <position position="114"/>
    </location>
</feature>
<feature type="mutagenesis site" description="Nearly complete loss of RNase activity, still binds RNA. Partially rescued by Mn(2+)." evidence="3 22">
    <original>E</original>
    <variation>D</variation>
    <location>
        <position position="117"/>
    </location>
</feature>
<feature type="mutagenesis site" description="In rnc70; slower growth, loss of RNase activity. Dominant over wild-type. Binds ds-RNA." evidence="3 22">
    <original>E</original>
    <variation>K</variation>
    <location>
        <position position="117"/>
    </location>
</feature>
<feature type="mutagenesis site" description="Loss of RNase activity, still binds RNA." evidence="3 22">
    <original>E</original>
    <variation>Q</variation>
    <location>
        <position position="117"/>
    </location>
</feature>
<feature type="sequence conflict" description="In Ref. 2; CAA26504." evidence="23" ref="2">
    <original>HLPLPTYLVVQVRGEAHDQEFTIHCQVS</original>
    <variation>PSAAADLSGSPGTWSKRTIRNLLSTARSV</variation>
    <location>
        <begin position="168"/>
        <end position="195"/>
    </location>
</feature>
<feature type="helix" evidence="26">
    <location>
        <begin position="3"/>
        <end position="13"/>
    </location>
</feature>
<feature type="helix" evidence="26">
    <location>
        <begin position="20"/>
        <end position="26"/>
    </location>
</feature>
<feature type="turn" evidence="26">
    <location>
        <begin position="30"/>
        <end position="32"/>
    </location>
</feature>
<feature type="helix" evidence="26">
    <location>
        <begin position="38"/>
        <end position="59"/>
    </location>
</feature>
<feature type="helix" evidence="26">
    <location>
        <begin position="65"/>
        <end position="76"/>
    </location>
</feature>
<feature type="helix" evidence="26">
    <location>
        <begin position="78"/>
        <end position="87"/>
    </location>
</feature>
<feature type="helix" evidence="26">
    <location>
        <begin position="90"/>
        <end position="93"/>
    </location>
</feature>
<feature type="helix" evidence="26">
    <location>
        <begin position="98"/>
        <end position="101"/>
    </location>
</feature>
<feature type="turn" evidence="26">
    <location>
        <begin position="102"/>
        <end position="104"/>
    </location>
</feature>
<feature type="helix" evidence="26">
    <location>
        <begin position="105"/>
        <end position="107"/>
    </location>
</feature>
<feature type="helix" evidence="26">
    <location>
        <begin position="109"/>
        <end position="126"/>
    </location>
</feature>
<feature type="helix" evidence="26">
    <location>
        <begin position="129"/>
        <end position="139"/>
    </location>
</feature>
<feature type="helix" evidence="26">
    <location>
        <begin position="141"/>
        <end position="146"/>
    </location>
</feature>
<feature type="helix" evidence="26">
    <location>
        <begin position="151"/>
        <end position="153"/>
    </location>
</feature>
<feature type="helix" evidence="26">
    <location>
        <begin position="156"/>
        <end position="166"/>
    </location>
</feature>
<feature type="strand" evidence="26">
    <location>
        <begin position="173"/>
        <end position="182"/>
    </location>
</feature>
<feature type="strand" evidence="26">
    <location>
        <begin position="185"/>
        <end position="193"/>
    </location>
</feature>
<feature type="strand" evidence="26">
    <location>
        <begin position="201"/>
        <end position="207"/>
    </location>
</feature>
<feature type="helix" evidence="26">
    <location>
        <begin position="208"/>
        <end position="222"/>
    </location>
</feature>
<protein>
    <recommendedName>
        <fullName>Ribonuclease 3</fullName>
        <ecNumber>3.1.26.3</ecNumber>
    </recommendedName>
    <alternativeName>
        <fullName>Ribonuclease III</fullName>
        <shortName>RNase III</shortName>
    </alternativeName>
</protein>
<comment type="function">
    <text evidence="8 9 10 11 13 14 15 16 17 18 20">Digests double-stranded RNA formed within single-strand substrates, but not RNA-DNA hybrids. Involved in the processing of rRNA precursors, viral transcripts, some mRNAs and at least 1 tRNA (metY, a minor form of tRNA-init-Met). Cleaves the 30S primary rRNA transcript to yield the immediate precursors to the 16S and 23S rRNAs; cleavage can occur in assembled 30S, 50S and even 70S subunits and is influenced by the presence of ribosomal proteins. The E.coli enzyme does not cleave R.capsulatus rRNA precursor, although R.capsulatus will complement an E.coli disruption, showing substrate recognition is different. Removes the intervening sequences from Salmonella typhimurium rRNA precursor. Complements the pre-crRNA processing defect in an rnc deletion in S.pyogenes strain 370, although this E.coli strain does not have the corresponding CRISPR locus (strain TOP10) (PubMed:23535272).</text>
</comment>
<comment type="catalytic activity">
    <reaction evidence="15">
        <text>Endonucleolytic cleavage to 5'-phosphomonoester.</text>
        <dbReference type="EC" id="3.1.26.3"/>
    </reaction>
</comment>
<comment type="cofactor">
    <cofactor evidence="3 6 20">
        <name>Mg(2+)</name>
        <dbReference type="ChEBI" id="CHEBI:18420"/>
    </cofactor>
    <text evidence="3 6 20">Divalent metal cations, preferably Mg(2+). While only 1 Mg(2+) is detected by crystallography, other evidence indicates there may be more than 1 metal necessary for catalysis. Binding of the second metal my be promoted by substrate binding.</text>
</comment>
<comment type="activity regulation">
    <text evidence="6 7">Non-competitively inhibited by 2-hydroxy-4H-isoquinoline-1,3-dione. Activity is down-regulated during cold shock by direct interaction with YmdB. Also down-regulated during entry into stationary phase by an YmdB-independent mechanism.</text>
</comment>
<comment type="subunit">
    <text evidence="20">Homodimer.</text>
</comment>
<comment type="interaction">
    <interactant intactId="EBI-557336">
        <id>P0A7Y0</id>
    </interactant>
    <interactant intactId="EBI-557325">
        <id>P30850</id>
        <label>rnb</label>
    </interactant>
    <organismsDiffer>false</organismsDiffer>
    <experiments>2</experiments>
</comment>
<comment type="subcellular location">
    <subcellularLocation>
        <location evidence="17">Cytoplasm</location>
    </subcellularLocation>
    <text>Loosely associated with ribosomes.</text>
</comment>
<comment type="induction">
    <text evidence="8 21">Expression increases as the growth rate increases. Encoded in the rnc-era-recO operon. Processes the 5' end of its own transcript leading to mRNA instability.</text>
</comment>
<comment type="disruption phenotype">
    <text evidence="9 12 14 19 21 22">Slower than wild-type growth. Transient accumulation of the 30S rRNA precursor occurs; 90% of 16S rRNA is correctly processed while an extended version of 23S rRNA accumulates in the ribosome. Half-life of a number of RNase III processed transcripts increases. In the absence of era and rnc there is a defect in chromosome partitioning. In strain HT115, loss of immunity against a plasmid with homology to CRISPR spacer sequences (PubMed:23535272).</text>
</comment>
<comment type="similarity">
    <text evidence="23">Belongs to the ribonuclease III family.</text>
</comment>
<comment type="caution">
    <text evidence="24 25">The original rnc-105 mutation is described as G44-&gt;D but the nucleotide sequence given indicates G44-&gt;S (PubMed:3903434). A later paper calls the same mutation G45-&gt;K (PubMed:9632264), which alters the residue and mutation.</text>
</comment>
<reference key="1">
    <citation type="journal article" date="1985" name="Mol. Gen. Genet.">
        <title>DNA sequencing of the Escherichia coli ribonuclease III gene and its mutations.</title>
        <authorList>
            <person name="Nashimoto H."/>
            <person name="Uchida H."/>
        </authorList>
    </citation>
    <scope>NUCLEOTIDE SEQUENCE [GENOMIC DNA]</scope>
    <scope>FUNCTION AS AN ENDORIBONUCLEASE</scope>
    <scope>MUTAGENESIS OF GLY-44</scope>
    <source>
        <strain>K12</strain>
    </source>
</reference>
<reference key="2">
    <citation type="journal article" date="1985" name="Nucleic Acids Res.">
        <title>The DNA sequence of the gene (rnc) encoding ribonuclease III of Escherichia coli.</title>
        <authorList>
            <person name="March P.E."/>
            <person name="Ahnn J."/>
            <person name="Inouye M."/>
        </authorList>
    </citation>
    <scope>NUCLEOTIDE SEQUENCE [GENOMIC DNA]</scope>
    <source>
        <strain>K12 / CS520</strain>
    </source>
</reference>
<reference key="3">
    <citation type="submission" date="1995-09" db="EMBL/GenBank/DDBJ databases">
        <authorList>
            <person name="Nashimoto H."/>
            <person name="Saito N."/>
        </authorList>
    </citation>
    <scope>NUCLEOTIDE SEQUENCE [GENOMIC DNA]</scope>
    <source>
        <strain>K12</strain>
    </source>
</reference>
<reference key="4">
    <citation type="journal article" date="1997" name="Science">
        <title>The complete genome sequence of Escherichia coli K-12.</title>
        <authorList>
            <person name="Blattner F.R."/>
            <person name="Plunkett G. III"/>
            <person name="Bloch C.A."/>
            <person name="Perna N.T."/>
            <person name="Burland V."/>
            <person name="Riley M."/>
            <person name="Collado-Vides J."/>
            <person name="Glasner J.D."/>
            <person name="Rode C.K."/>
            <person name="Mayhew G.F."/>
            <person name="Gregor J."/>
            <person name="Davis N.W."/>
            <person name="Kirkpatrick H.A."/>
            <person name="Goeden M.A."/>
            <person name="Rose D.J."/>
            <person name="Mau B."/>
            <person name="Shao Y."/>
        </authorList>
    </citation>
    <scope>NUCLEOTIDE SEQUENCE [LARGE SCALE GENOMIC DNA]</scope>
    <source>
        <strain>K12 / MG1655 / ATCC 47076</strain>
    </source>
</reference>
<reference key="5">
    <citation type="journal article" date="2006" name="Mol. Syst. Biol.">
        <title>Highly accurate genome sequences of Escherichia coli K-12 strains MG1655 and W3110.</title>
        <authorList>
            <person name="Hayashi K."/>
            <person name="Morooka N."/>
            <person name="Yamamoto Y."/>
            <person name="Fujita K."/>
            <person name="Isono K."/>
            <person name="Choi S."/>
            <person name="Ohtsubo E."/>
            <person name="Baba T."/>
            <person name="Wanner B.L."/>
            <person name="Mori H."/>
            <person name="Horiuchi T."/>
        </authorList>
    </citation>
    <scope>NUCLEOTIDE SEQUENCE [LARGE SCALE GENOMIC DNA]</scope>
    <source>
        <strain>K12 / W3110 / ATCC 27325 / DSM 5911</strain>
    </source>
</reference>
<reference key="6">
    <citation type="journal article" date="1989" name="J. Bacteriol.">
        <title>Genetic analysis of the rnc operon of Escherichia coli.</title>
        <authorList>
            <person name="Takiff H.E."/>
            <person name="Chen S.M."/>
            <person name="Court D.L."/>
        </authorList>
    </citation>
    <scope>NUCLEOTIDE SEQUENCE [GENOMIC DNA] OF 1-45</scope>
    <scope>DISRUPTION PHENOTYPE</scope>
    <scope>OPERON STRUCTURE</scope>
    <source>
        <strain>K12 / W3110</strain>
    </source>
</reference>
<reference key="7">
    <citation type="journal article" date="1990" name="J. Biol. Chem.">
        <title>Expression and characterization of RNase III and Era proteins. Products of the rnc operon of Escherichia coli.</title>
        <authorList>
            <person name="Chen S.M."/>
            <person name="Takiff H.E."/>
            <person name="Barber A.M."/>
            <person name="Dubois G.C."/>
            <person name="Bardwell J.C."/>
            <person name="Court D.L."/>
        </authorList>
    </citation>
    <scope>PROTEIN SEQUENCE OF 1-30</scope>
    <scope>MRNA PROCESSING</scope>
    <scope>ATP-BINDING</scope>
    <source>
        <strain>K12 / W3110</strain>
    </source>
</reference>
<reference key="8">
    <citation type="journal article" date="1986" name="Proc. Natl. Acad. Sci. U.S.A.">
        <title>A GTP-binding protein of Escherichia coli has homology to yeast RAS proteins.</title>
        <authorList>
            <person name="Ahnn J."/>
            <person name="March P.E."/>
            <person name="Takiff H.E."/>
            <person name="Inouye M."/>
        </authorList>
    </citation>
    <scope>NUCLEOTIDE SEQUENCE [GENOMIC DNA] OF 211-226</scope>
</reference>
<reference key="9">
    <citation type="journal article" date="1968" name="J. Biol. Chem.">
        <title>Purification and properties of ribonuclease III from Escherichia coli.</title>
        <authorList>
            <person name="Robertson H.D."/>
            <person name="Webster R.E."/>
            <person name="Zinder N.D."/>
        </authorList>
    </citation>
    <scope>FUNCTION AS A DS-RNA SPECIFIC ENDORIBONUCLEASE</scope>
    <scope>SUBCELLULAR LOCATION</scope>
    <scope>ASSOCIATION WITH RIBOSOMES</scope>
    <source>
        <strain>K12 / K38 / S26</strain>
    </source>
</reference>
<reference key="10">
    <citation type="journal article" date="1973" name="Proc. Natl. Acad. Sci. U.S.A.">
        <title>T7 early RNAs and Escherichia coli ribosomal RNAs are cut from large precursor RNAs in vivo by ribonuclease 3.</title>
        <authorList>
            <person name="Dunn J.J."/>
            <person name="Studier F.W."/>
        </authorList>
    </citation>
    <scope>FUNCTION IN ENTEROBACTERIA PHAGE T7 RNA PROCESSING</scope>
    <scope>FUNCTION IN PROCESSING OF RRNA</scope>
    <scope>DISRUPTION PHENOTYPE</scope>
    <source>
        <strain>K12 / A19</strain>
    </source>
</reference>
<reference key="11">
    <citation type="journal article" date="1974" name="J. Biol. Chem.">
        <title>Ribonuclease 3 does not degrade deoxyribonucleic acid-ribonucleic acid hybrids.</title>
        <authorList>
            <person name="Crouch R.J."/>
        </authorList>
    </citation>
    <scope>FUNCTION AS A DS-RNA SPECIFIC ENDORIBONUCLEASE</scope>
    <scope>CATALYTIC ACTIVITY</scope>
    <source>
        <strain>K12 / D10</strain>
    </source>
</reference>
<reference key="12">
    <citation type="journal article" date="1974" name="J. Mol. Biol.">
        <title>30 S pre-ribosomal RNA of Escherichia coli and products of cleavage by ribonuclease III: length and molecular weight.</title>
        <authorList>
            <person name="Nikolaev N."/>
            <person name="Schlessinger D."/>
            <person name="Wellauer P.K."/>
        </authorList>
    </citation>
    <scope>FUNCTION IN PROCESSING OF RRNA</scope>
</reference>
<reference key="13">
    <citation type="journal article" date="1976" name="J. Biol. Chem.">
        <title>RNase III cleavage of single-stranded RNA. Effect of ionic strength on the fideltiy of cleavage.</title>
        <authorList>
            <person name="Dunn J.J."/>
        </authorList>
    </citation>
    <scope>FUNCTION IN PROCESSING OF RRNA</scope>
    <scope>COFACTOR</scope>
    <scope>SUBUNIT</scope>
</reference>
<reference key="14">
    <citation type="journal article" date="1980" name="Biochem. Biophys. Res. Commun.">
        <title>The synthesis of some proteins is affected in RNA processing mutants of Escherichia coli.</title>
        <authorList>
            <person name="Gitelman D.R."/>
            <person name="Apirion D."/>
        </authorList>
    </citation>
    <scope>ROLE IN PROTEIN SYNTHESIS</scope>
</reference>
<reference key="15">
    <citation type="journal article" date="1984" name="Proc. Natl. Acad. Sci. U.S.A.">
        <title>RNase III cleavage is obligate for maturation but not for function of Escherichia coli pre-23S rRNA.</title>
        <authorList>
            <person name="King T.C."/>
            <person name="Sirdeshmukh R."/>
            <person name="Schlessinger D."/>
        </authorList>
    </citation>
    <scope>DISRUPTION PHENOTYPE</scope>
</reference>
<reference key="16">
    <citation type="journal article" date="1989" name="J. Mol. Biol.">
        <title>Cleavage by RNase III in the transcripts of the met Y-nus-A-infB operon of Escherichia coli releases the tRNA and initiates the decay of the downstream mRNA.</title>
        <authorList>
            <person name="Regnier P."/>
            <person name="Grunberg-Manago M."/>
        </authorList>
    </citation>
    <scope>FUNCTION IN PROCESSING OF TRNA</scope>
</reference>
<reference key="17">
    <citation type="journal article" date="1990" name="Biochimie">
        <title>RNase III cleavages in non-coding leaders of Escherichia coli transcripts control mRNA stability and genetic expression.</title>
        <authorList>
            <person name="Regnier P."/>
            <person name="Grunberg-Manago M."/>
        </authorList>
    </citation>
    <scope>FUNCTION IN PROCESSING OF MRNA</scope>
    <scope>INDUCTION</scope>
</reference>
<reference key="18">
    <citation type="journal article" date="1990" name="Cell">
        <title>The excision of intervening sequences from Salmonella 23S ribosomal RNA.</title>
        <authorList>
            <person name="Burgin A.B."/>
            <person name="Parodos K."/>
            <person name="Lane D.J."/>
            <person name="Pace N.R."/>
        </authorList>
    </citation>
    <scope>ROLE IN EXCISION OF INTERVENING SEQUENCES</scope>
    <source>
        <strain>N2076</strain>
    </source>
</reference>
<reference key="19">
    <citation type="journal article" date="1998" name="Mol. Microbiol.">
        <title>Genetic uncoupling of the dsRNA-binding and RNA cleavage activities of the Escherichia coli endoribonuclease RNase III--the effect of dsRNA binding on gene expression.</title>
        <authorList>
            <person name="Dasgupta S."/>
            <person name="Fernandez L."/>
            <person name="Kameyama L."/>
            <person name="Inada T."/>
            <person name="Nakamura Y."/>
            <person name="Pappas A."/>
            <person name="Court D.L."/>
        </authorList>
    </citation>
    <scope>MUTAGENESIS OF GLY-44 AND GLU-117</scope>
    <scope>DISRUPTION PHENOTYPE</scope>
    <source>
        <strain>K12 / W3110</strain>
    </source>
</reference>
<reference key="20">
    <citation type="journal article" date="1998" name="Mol. Microbiol.">
        <title>Cell cycle arrest in Era GTPase mutants: a potential growth rate-regulated checkpoint in Escherichia coli.</title>
        <authorList>
            <person name="Britton R.A."/>
            <person name="Powell B.S."/>
            <person name="Dasgupta S."/>
            <person name="Sun Q."/>
            <person name="Margolin W."/>
            <person name="Lupski J.R."/>
            <person name="Court D.L."/>
        </authorList>
    </citation>
    <scope>INDUCTION</scope>
    <scope>DISRUPTION PHENOTYPE</scope>
    <source>
        <strain>K12 / W3110</strain>
    </source>
</reference>
<reference key="21">
    <citation type="journal article" date="1998" name="Nucleic Acids Res.">
        <title>Different cleavage specificities of RNases III from Rhodobacter capsulatus and Escherichia coli.</title>
        <authorList>
            <person name="Conrad C."/>
            <person name="Rauhut R."/>
            <person name="Klug G."/>
        </authorList>
    </citation>
    <scope>SUBSTRATE SPECIFICITY</scope>
</reference>
<reference key="22">
    <citation type="journal article" date="2001" name="Biochemistry">
        <title>Mechanism of action of Escherichia coli ribonuclease III. Stringent chemical requirement for the glutamic acid 117 side chain and Mn2+ rescue of the Glu117Asp mutant.</title>
        <authorList>
            <person name="Sun W."/>
            <person name="Nicholson A.W."/>
        </authorList>
    </citation>
    <scope>COFACTOR</scope>
    <scope>MUTAGENESIS OF GLU-117</scope>
    <scope>CATALYTIC MODEL</scope>
</reference>
<reference key="23">
    <citation type="journal article" date="2001" name="Structure">
        <title>Crystallographic and modeling studies of RNase III suggest a mechanism for double-stranded RNA cleavage.</title>
        <authorList>
            <person name="Blaszczyk J."/>
            <person name="Tropea J.E."/>
            <person name="Bubunenko M."/>
            <person name="Routzahn K.M."/>
            <person name="Waugh D.S."/>
            <person name="Court D.L."/>
            <person name="Ji X."/>
        </authorList>
    </citation>
    <scope>MUTAGENESIS OF LEU-40</scope>
</reference>
<reference key="24">
    <citation type="journal article" date="2003" name="BMC Mol. Biol.">
        <title>Functional interaction between RNase III and the Escherichia coli ribosome.</title>
        <authorList>
            <person name="Allas U."/>
            <person name="Liiv A."/>
            <person name="Remme J."/>
        </authorList>
    </citation>
    <scope>ASSOCIATION WITH RIBOSOMES</scope>
</reference>
<reference key="25">
    <citation type="journal article" date="2004" name="Biochemistry">
        <title>Mutational analysis of the nuclease domain of Escherichia coli ribonuclease III. Identification of conserved acidic residues that are important for catalytic function in vitro.</title>
        <authorList>
            <person name="Sun W."/>
            <person name="Li G."/>
            <person name="Nicholson A.W."/>
        </authorList>
    </citation>
    <scope>MUTAGENESIS OF GLU-38; GLU-41; ASP-45; GLU-65; GLU-100 AND ASP-114</scope>
</reference>
<reference key="26">
    <citation type="journal article" date="2005" name="Nucleic Acids Res.">
        <title>Catalytic mechanism of Escherichia coli ribonuclease III: kinetic and inhibitor evidence for the involvement of two magnesium ions in RNA phosphodiester hydrolysis.</title>
        <authorList>
            <person name="Sun W."/>
            <person name="Pertzev A."/>
            <person name="Nicholson A.W."/>
        </authorList>
    </citation>
    <scope>ACTIVITY REGULATION</scope>
    <scope>COFACTOR</scope>
    <scope>CATALYTIC MODEL</scope>
</reference>
<reference key="27">
    <citation type="journal article" date="2008" name="Genes Dev.">
        <title>YmdB: a stress-responsive ribonuclease-binding regulator of E. coli RNase III activity.</title>
        <authorList>
            <person name="Kim K.S."/>
            <person name="Manasherob R."/>
            <person name="Cohen S.N."/>
        </authorList>
    </citation>
    <scope>ACTIVITY REGULATION</scope>
</reference>
<reference key="28">
    <citation type="journal article" date="2013" name="RNA Biol.">
        <title>crRNA and tracrRNA guide Cas9-mediated DNA interference in Streptococcus thermophilus.</title>
        <authorList>
            <person name="Karvelis T."/>
            <person name="Gasiunas G."/>
            <person name="Miksys A."/>
            <person name="Barrangou R."/>
            <person name="Horvath P."/>
            <person name="Siksnys V."/>
        </authorList>
    </citation>
    <scope>FUNCTION</scope>
    <scope>DISRUPTION PHENOTYPE</scope>
    <source>
        <strain>HT115</strain>
        <strain>TOP10</strain>
    </source>
</reference>
<reference key="29">
    <citation type="journal article" date="1995" name="EMBO J.">
        <title>Structure of the dsRNA binding domain of E. coli RNase III.</title>
        <authorList>
            <person name="Kharrat A."/>
            <person name="Macias M.J."/>
            <person name="Gibson T.J."/>
            <person name="Nilges M."/>
            <person name="Pastore A."/>
        </authorList>
    </citation>
    <scope>STRUCTURE BY NMR OF 153-226</scope>
    <scope>RNA-BINDING</scope>
</reference>
<accession>P0A7Y0</accession>
<accession>P05797</accession>
<accession>P06141</accession>
<accession>Q2MAG3</accession>
<organism>
    <name type="scientific">Escherichia coli (strain K12)</name>
    <dbReference type="NCBI Taxonomy" id="83333"/>
    <lineage>
        <taxon>Bacteria</taxon>
        <taxon>Pseudomonadati</taxon>
        <taxon>Pseudomonadota</taxon>
        <taxon>Gammaproteobacteria</taxon>
        <taxon>Enterobacterales</taxon>
        <taxon>Enterobacteriaceae</taxon>
        <taxon>Escherichia</taxon>
    </lineage>
</organism>
<dbReference type="EC" id="3.1.26.3"/>
<dbReference type="EMBL" id="X02946">
    <property type="protein sequence ID" value="CAA26692.1"/>
    <property type="molecule type" value="Genomic_DNA"/>
</dbReference>
<dbReference type="EMBL" id="X02673">
    <property type="protein sequence ID" value="CAA26504.1"/>
    <property type="molecule type" value="Genomic_DNA"/>
</dbReference>
<dbReference type="EMBL" id="D64044">
    <property type="protein sequence ID" value="BAA10914.1"/>
    <property type="molecule type" value="Genomic_DNA"/>
</dbReference>
<dbReference type="EMBL" id="U36841">
    <property type="protein sequence ID" value="AAA79829.1"/>
    <property type="molecule type" value="Genomic_DNA"/>
</dbReference>
<dbReference type="EMBL" id="U00096">
    <property type="protein sequence ID" value="AAC75620.1"/>
    <property type="molecule type" value="Genomic_DNA"/>
</dbReference>
<dbReference type="EMBL" id="AP009048">
    <property type="protein sequence ID" value="BAE76743.1"/>
    <property type="molecule type" value="Genomic_DNA"/>
</dbReference>
<dbReference type="EMBL" id="M26415">
    <property type="protein sequence ID" value="AAA21843.1"/>
    <property type="molecule type" value="Genomic_DNA"/>
</dbReference>
<dbReference type="EMBL" id="M14658">
    <property type="protein sequence ID" value="AAA03241.1"/>
    <property type="molecule type" value="Unassigned_DNA"/>
</dbReference>
<dbReference type="PIR" id="F65034">
    <property type="entry name" value="NREC3"/>
</dbReference>
<dbReference type="RefSeq" id="NP_417062.1">
    <property type="nucleotide sequence ID" value="NC_000913.3"/>
</dbReference>
<dbReference type="RefSeq" id="WP_001068343.1">
    <property type="nucleotide sequence ID" value="NZ_STEB01000011.1"/>
</dbReference>
<dbReference type="PDB" id="7R97">
    <property type="method" value="X-ray"/>
    <property type="resolution" value="1.80 A"/>
    <property type="chains" value="A/B=1-226"/>
</dbReference>
<dbReference type="PDBsum" id="7R97"/>
<dbReference type="SMR" id="P0A7Y0"/>
<dbReference type="BioGRID" id="4260597">
    <property type="interactions" value="65"/>
</dbReference>
<dbReference type="BioGRID" id="851372">
    <property type="interactions" value="1"/>
</dbReference>
<dbReference type="DIP" id="DIP-48223N"/>
<dbReference type="FunCoup" id="P0A7Y0">
    <property type="interactions" value="579"/>
</dbReference>
<dbReference type="IntAct" id="P0A7Y0">
    <property type="interactions" value="6"/>
</dbReference>
<dbReference type="STRING" id="511145.b2567"/>
<dbReference type="jPOST" id="P0A7Y0"/>
<dbReference type="PaxDb" id="511145-b2567"/>
<dbReference type="EnsemblBacteria" id="AAC75620">
    <property type="protein sequence ID" value="AAC75620"/>
    <property type="gene ID" value="b2567"/>
</dbReference>
<dbReference type="GeneID" id="93774524"/>
<dbReference type="GeneID" id="947033"/>
<dbReference type="KEGG" id="ecj:JW2551"/>
<dbReference type="KEGG" id="eco:b2567"/>
<dbReference type="KEGG" id="ecoc:C3026_14220"/>
<dbReference type="PATRIC" id="fig|1411691.4.peg.4167"/>
<dbReference type="EchoBASE" id="EB0850"/>
<dbReference type="eggNOG" id="COG0571">
    <property type="taxonomic scope" value="Bacteria"/>
</dbReference>
<dbReference type="HOGENOM" id="CLU_000907_1_1_6"/>
<dbReference type="InParanoid" id="P0A7Y0"/>
<dbReference type="OMA" id="LTHKSCK"/>
<dbReference type="OrthoDB" id="9805026at2"/>
<dbReference type="PhylomeDB" id="P0A7Y0"/>
<dbReference type="BioCyc" id="EcoCyc:EG10857-MONOMER"/>
<dbReference type="BioCyc" id="MetaCyc:EG10857-MONOMER"/>
<dbReference type="BRENDA" id="3.1.26.3">
    <property type="organism ID" value="2026"/>
</dbReference>
<dbReference type="PRO" id="PR:P0A7Y0"/>
<dbReference type="Proteomes" id="UP000000625">
    <property type="component" value="Chromosome"/>
</dbReference>
<dbReference type="GO" id="GO:0005829">
    <property type="term" value="C:cytosol"/>
    <property type="evidence" value="ECO:0000314"/>
    <property type="project" value="EcoCyc"/>
</dbReference>
<dbReference type="GO" id="GO:0005524">
    <property type="term" value="F:ATP binding"/>
    <property type="evidence" value="ECO:0007669"/>
    <property type="project" value="UniProtKB-KW"/>
</dbReference>
<dbReference type="GO" id="GO:0003725">
    <property type="term" value="F:double-stranded RNA binding"/>
    <property type="evidence" value="ECO:0000318"/>
    <property type="project" value="GO_Central"/>
</dbReference>
<dbReference type="GO" id="GO:0019899">
    <property type="term" value="F:enzyme binding"/>
    <property type="evidence" value="ECO:0000353"/>
    <property type="project" value="EcoCyc"/>
</dbReference>
<dbReference type="GO" id="GO:0000287">
    <property type="term" value="F:magnesium ion binding"/>
    <property type="evidence" value="ECO:0000314"/>
    <property type="project" value="EcoCyc"/>
</dbReference>
<dbReference type="GO" id="GO:0042803">
    <property type="term" value="F:protein homodimerization activity"/>
    <property type="evidence" value="ECO:0000353"/>
    <property type="project" value="EcoCyc"/>
</dbReference>
<dbReference type="GO" id="GO:0004525">
    <property type="term" value="F:ribonuclease III activity"/>
    <property type="evidence" value="ECO:0000314"/>
    <property type="project" value="EcoCyc"/>
</dbReference>
<dbReference type="GO" id="GO:0019843">
    <property type="term" value="F:rRNA binding"/>
    <property type="evidence" value="ECO:0007669"/>
    <property type="project" value="UniProtKB-KW"/>
</dbReference>
<dbReference type="GO" id="GO:0006397">
    <property type="term" value="P:mRNA processing"/>
    <property type="evidence" value="ECO:0000315"/>
    <property type="project" value="EcoCyc"/>
</dbReference>
<dbReference type="GO" id="GO:0010468">
    <property type="term" value="P:regulation of gene expression"/>
    <property type="evidence" value="ECO:0000318"/>
    <property type="project" value="GO_Central"/>
</dbReference>
<dbReference type="GO" id="GO:0006396">
    <property type="term" value="P:RNA processing"/>
    <property type="evidence" value="ECO:0000315"/>
    <property type="project" value="EcoCyc"/>
</dbReference>
<dbReference type="GO" id="GO:0006364">
    <property type="term" value="P:rRNA processing"/>
    <property type="evidence" value="ECO:0000315"/>
    <property type="project" value="EcoCyc"/>
</dbReference>
<dbReference type="GO" id="GO:0008033">
    <property type="term" value="P:tRNA processing"/>
    <property type="evidence" value="ECO:0007669"/>
    <property type="project" value="UniProtKB-KW"/>
</dbReference>
<dbReference type="CDD" id="cd10845">
    <property type="entry name" value="DSRM_RNAse_III_family"/>
    <property type="match status" value="1"/>
</dbReference>
<dbReference type="CDD" id="cd00593">
    <property type="entry name" value="RIBOc"/>
    <property type="match status" value="1"/>
</dbReference>
<dbReference type="FunFam" id="1.10.1520.10:FF:000001">
    <property type="entry name" value="Ribonuclease 3"/>
    <property type="match status" value="1"/>
</dbReference>
<dbReference type="FunFam" id="3.30.160.20:FF:000003">
    <property type="entry name" value="Ribonuclease 3"/>
    <property type="match status" value="1"/>
</dbReference>
<dbReference type="Gene3D" id="3.30.160.20">
    <property type="match status" value="1"/>
</dbReference>
<dbReference type="Gene3D" id="1.10.1520.10">
    <property type="entry name" value="Ribonuclease III domain"/>
    <property type="match status" value="1"/>
</dbReference>
<dbReference type="HAMAP" id="MF_00104">
    <property type="entry name" value="RNase_III"/>
    <property type="match status" value="1"/>
</dbReference>
<dbReference type="InterPro" id="IPR014720">
    <property type="entry name" value="dsRBD_dom"/>
</dbReference>
<dbReference type="InterPro" id="IPR011907">
    <property type="entry name" value="RNase_III"/>
</dbReference>
<dbReference type="InterPro" id="IPR000999">
    <property type="entry name" value="RNase_III_dom"/>
</dbReference>
<dbReference type="InterPro" id="IPR036389">
    <property type="entry name" value="RNase_III_sf"/>
</dbReference>
<dbReference type="NCBIfam" id="TIGR02191">
    <property type="entry name" value="RNaseIII"/>
    <property type="match status" value="1"/>
</dbReference>
<dbReference type="PANTHER" id="PTHR11207:SF0">
    <property type="entry name" value="RIBONUCLEASE 3"/>
    <property type="match status" value="1"/>
</dbReference>
<dbReference type="PANTHER" id="PTHR11207">
    <property type="entry name" value="RIBONUCLEASE III"/>
    <property type="match status" value="1"/>
</dbReference>
<dbReference type="Pfam" id="PF00035">
    <property type="entry name" value="dsrm"/>
    <property type="match status" value="1"/>
</dbReference>
<dbReference type="Pfam" id="PF14622">
    <property type="entry name" value="Ribonucleas_3_3"/>
    <property type="match status" value="1"/>
</dbReference>
<dbReference type="SMART" id="SM00358">
    <property type="entry name" value="DSRM"/>
    <property type="match status" value="1"/>
</dbReference>
<dbReference type="SMART" id="SM00535">
    <property type="entry name" value="RIBOc"/>
    <property type="match status" value="1"/>
</dbReference>
<dbReference type="SUPFAM" id="SSF54768">
    <property type="entry name" value="dsRNA-binding domain-like"/>
    <property type="match status" value="1"/>
</dbReference>
<dbReference type="SUPFAM" id="SSF69065">
    <property type="entry name" value="RNase III domain-like"/>
    <property type="match status" value="1"/>
</dbReference>
<dbReference type="PROSITE" id="PS50137">
    <property type="entry name" value="DS_RBD"/>
    <property type="match status" value="1"/>
</dbReference>
<dbReference type="PROSITE" id="PS00517">
    <property type="entry name" value="RNASE_3_1"/>
    <property type="match status" value="1"/>
</dbReference>
<dbReference type="PROSITE" id="PS50142">
    <property type="entry name" value="RNASE_3_2"/>
    <property type="match status" value="1"/>
</dbReference>
<keyword id="KW-0002">3D-structure</keyword>
<keyword id="KW-0067">ATP-binding</keyword>
<keyword id="KW-0963">Cytoplasm</keyword>
<keyword id="KW-0903">Direct protein sequencing</keyword>
<keyword id="KW-0255">Endonuclease</keyword>
<keyword id="KW-0378">Hydrolase</keyword>
<keyword id="KW-0460">Magnesium</keyword>
<keyword id="KW-0479">Metal-binding</keyword>
<keyword id="KW-0507">mRNA processing</keyword>
<keyword id="KW-0540">Nuclease</keyword>
<keyword id="KW-0547">Nucleotide-binding</keyword>
<keyword id="KW-1185">Reference proteome</keyword>
<keyword id="KW-0694">RNA-binding</keyword>
<keyword id="KW-0698">rRNA processing</keyword>
<keyword id="KW-0699">rRNA-binding</keyword>
<keyword id="KW-0819">tRNA processing</keyword>
<evidence type="ECO:0000250" key="1"/>
<evidence type="ECO:0000255" key="2"/>
<evidence type="ECO:0000269" key="3">
    <source>
    </source>
</evidence>
<evidence type="ECO:0000269" key="4">
    <source>
    </source>
</evidence>
<evidence type="ECO:0000269" key="5">
    <source>
    </source>
</evidence>
<evidence type="ECO:0000269" key="6">
    <source>
    </source>
</evidence>
<evidence type="ECO:0000269" key="7">
    <source>
    </source>
</evidence>
<evidence type="ECO:0000269" key="8">
    <source>
    </source>
</evidence>
<evidence type="ECO:0000269" key="9">
    <source>
    </source>
</evidence>
<evidence type="ECO:0000269" key="10">
    <source>
    </source>
</evidence>
<evidence type="ECO:0000269" key="11">
    <source>
    </source>
</evidence>
<evidence type="ECO:0000269" key="12">
    <source>
    </source>
</evidence>
<evidence type="ECO:0000269" key="13">
    <source>
    </source>
</evidence>
<evidence type="ECO:0000269" key="14">
    <source>
    </source>
</evidence>
<evidence type="ECO:0000269" key="15">
    <source>
    </source>
</evidence>
<evidence type="ECO:0000269" key="16">
    <source>
    </source>
</evidence>
<evidence type="ECO:0000269" key="17">
    <source>
    </source>
</evidence>
<evidence type="ECO:0000269" key="18">
    <source>
    </source>
</evidence>
<evidence type="ECO:0000269" key="19">
    <source>
    </source>
</evidence>
<evidence type="ECO:0000269" key="20">
    <source>
    </source>
</evidence>
<evidence type="ECO:0000269" key="21">
    <source>
    </source>
</evidence>
<evidence type="ECO:0000269" key="22">
    <source>
    </source>
</evidence>
<evidence type="ECO:0000305" key="23"/>
<evidence type="ECO:0000305" key="24">
    <source>
    </source>
</evidence>
<evidence type="ECO:0000305" key="25">
    <source>
    </source>
</evidence>
<evidence type="ECO:0007829" key="26">
    <source>
        <dbReference type="PDB" id="7R97"/>
    </source>
</evidence>